<accession>B1KQY8</accession>
<reference key="1">
    <citation type="submission" date="2008-02" db="EMBL/GenBank/DDBJ databases">
        <title>Complete sequence of Shewanella woodyi ATCC 51908.</title>
        <authorList>
            <consortium name="US DOE Joint Genome Institute"/>
            <person name="Copeland A."/>
            <person name="Lucas S."/>
            <person name="Lapidus A."/>
            <person name="Glavina del Rio T."/>
            <person name="Dalin E."/>
            <person name="Tice H."/>
            <person name="Bruce D."/>
            <person name="Goodwin L."/>
            <person name="Pitluck S."/>
            <person name="Sims D."/>
            <person name="Brettin T."/>
            <person name="Detter J.C."/>
            <person name="Han C."/>
            <person name="Kuske C.R."/>
            <person name="Schmutz J."/>
            <person name="Larimer F."/>
            <person name="Land M."/>
            <person name="Hauser L."/>
            <person name="Kyrpides N."/>
            <person name="Lykidis A."/>
            <person name="Zhao J.-S."/>
            <person name="Richardson P."/>
        </authorList>
    </citation>
    <scope>NUCLEOTIDE SEQUENCE [LARGE SCALE GENOMIC DNA]</scope>
    <source>
        <strain>ATCC 51908 / MS32</strain>
    </source>
</reference>
<organism>
    <name type="scientific">Shewanella woodyi (strain ATCC 51908 / MS32)</name>
    <dbReference type="NCBI Taxonomy" id="392500"/>
    <lineage>
        <taxon>Bacteria</taxon>
        <taxon>Pseudomonadati</taxon>
        <taxon>Pseudomonadota</taxon>
        <taxon>Gammaproteobacteria</taxon>
        <taxon>Alteromonadales</taxon>
        <taxon>Shewanellaceae</taxon>
        <taxon>Shewanella</taxon>
    </lineage>
</organism>
<protein>
    <recommendedName>
        <fullName evidence="1">1-deoxy-D-xylulose-5-phosphate synthase</fullName>
        <ecNumber evidence="1">2.2.1.7</ecNumber>
    </recommendedName>
    <alternativeName>
        <fullName evidence="1">1-deoxyxylulose-5-phosphate synthase</fullName>
        <shortName evidence="1">DXP synthase</shortName>
        <shortName evidence="1">DXPS</shortName>
    </alternativeName>
</protein>
<proteinExistence type="inferred from homology"/>
<evidence type="ECO:0000255" key="1">
    <source>
        <dbReference type="HAMAP-Rule" id="MF_00315"/>
    </source>
</evidence>
<name>DXS_SHEWM</name>
<dbReference type="EC" id="2.2.1.7" evidence="1"/>
<dbReference type="EMBL" id="CP000961">
    <property type="protein sequence ID" value="ACA87744.1"/>
    <property type="molecule type" value="Genomic_DNA"/>
</dbReference>
<dbReference type="RefSeq" id="WP_012326078.1">
    <property type="nucleotide sequence ID" value="NC_010506.1"/>
</dbReference>
<dbReference type="SMR" id="B1KQY8"/>
<dbReference type="STRING" id="392500.Swoo_3478"/>
<dbReference type="KEGG" id="swd:Swoo_3478"/>
<dbReference type="eggNOG" id="COG1154">
    <property type="taxonomic scope" value="Bacteria"/>
</dbReference>
<dbReference type="HOGENOM" id="CLU_009227_1_4_6"/>
<dbReference type="UniPathway" id="UPA00064">
    <property type="reaction ID" value="UER00091"/>
</dbReference>
<dbReference type="Proteomes" id="UP000002168">
    <property type="component" value="Chromosome"/>
</dbReference>
<dbReference type="GO" id="GO:0005829">
    <property type="term" value="C:cytosol"/>
    <property type="evidence" value="ECO:0007669"/>
    <property type="project" value="TreeGrafter"/>
</dbReference>
<dbReference type="GO" id="GO:0008661">
    <property type="term" value="F:1-deoxy-D-xylulose-5-phosphate synthase activity"/>
    <property type="evidence" value="ECO:0007669"/>
    <property type="project" value="UniProtKB-UniRule"/>
</dbReference>
<dbReference type="GO" id="GO:0000287">
    <property type="term" value="F:magnesium ion binding"/>
    <property type="evidence" value="ECO:0007669"/>
    <property type="project" value="UniProtKB-UniRule"/>
</dbReference>
<dbReference type="GO" id="GO:0030976">
    <property type="term" value="F:thiamine pyrophosphate binding"/>
    <property type="evidence" value="ECO:0007669"/>
    <property type="project" value="UniProtKB-UniRule"/>
</dbReference>
<dbReference type="GO" id="GO:0052865">
    <property type="term" value="P:1-deoxy-D-xylulose 5-phosphate biosynthetic process"/>
    <property type="evidence" value="ECO:0007669"/>
    <property type="project" value="UniProtKB-UniPathway"/>
</dbReference>
<dbReference type="GO" id="GO:0019288">
    <property type="term" value="P:isopentenyl diphosphate biosynthetic process, methylerythritol 4-phosphate pathway"/>
    <property type="evidence" value="ECO:0007669"/>
    <property type="project" value="TreeGrafter"/>
</dbReference>
<dbReference type="GO" id="GO:0016114">
    <property type="term" value="P:terpenoid biosynthetic process"/>
    <property type="evidence" value="ECO:0007669"/>
    <property type="project" value="UniProtKB-UniRule"/>
</dbReference>
<dbReference type="GO" id="GO:0009228">
    <property type="term" value="P:thiamine biosynthetic process"/>
    <property type="evidence" value="ECO:0007669"/>
    <property type="project" value="UniProtKB-UniRule"/>
</dbReference>
<dbReference type="CDD" id="cd02007">
    <property type="entry name" value="TPP_DXS"/>
    <property type="match status" value="1"/>
</dbReference>
<dbReference type="CDD" id="cd07033">
    <property type="entry name" value="TPP_PYR_DXS_TK_like"/>
    <property type="match status" value="1"/>
</dbReference>
<dbReference type="FunFam" id="3.40.50.920:FF:000002">
    <property type="entry name" value="1-deoxy-D-xylulose-5-phosphate synthase"/>
    <property type="match status" value="1"/>
</dbReference>
<dbReference type="FunFam" id="3.40.50.970:FF:000005">
    <property type="entry name" value="1-deoxy-D-xylulose-5-phosphate synthase"/>
    <property type="match status" value="1"/>
</dbReference>
<dbReference type="Gene3D" id="3.40.50.920">
    <property type="match status" value="1"/>
</dbReference>
<dbReference type="Gene3D" id="3.40.50.970">
    <property type="match status" value="2"/>
</dbReference>
<dbReference type="HAMAP" id="MF_00315">
    <property type="entry name" value="DXP_synth"/>
    <property type="match status" value="1"/>
</dbReference>
<dbReference type="InterPro" id="IPR005477">
    <property type="entry name" value="Dxylulose-5-P_synthase"/>
</dbReference>
<dbReference type="InterPro" id="IPR029061">
    <property type="entry name" value="THDP-binding"/>
</dbReference>
<dbReference type="InterPro" id="IPR009014">
    <property type="entry name" value="Transketo_C/PFOR_II"/>
</dbReference>
<dbReference type="InterPro" id="IPR005475">
    <property type="entry name" value="Transketolase-like_Pyr-bd"/>
</dbReference>
<dbReference type="InterPro" id="IPR020826">
    <property type="entry name" value="Transketolase_BS"/>
</dbReference>
<dbReference type="InterPro" id="IPR033248">
    <property type="entry name" value="Transketolase_C"/>
</dbReference>
<dbReference type="InterPro" id="IPR049557">
    <property type="entry name" value="Transketolase_CS"/>
</dbReference>
<dbReference type="NCBIfam" id="TIGR00204">
    <property type="entry name" value="dxs"/>
    <property type="match status" value="1"/>
</dbReference>
<dbReference type="NCBIfam" id="NF003933">
    <property type="entry name" value="PRK05444.2-2"/>
    <property type="match status" value="1"/>
</dbReference>
<dbReference type="PANTHER" id="PTHR43322">
    <property type="entry name" value="1-D-DEOXYXYLULOSE 5-PHOSPHATE SYNTHASE-RELATED"/>
    <property type="match status" value="1"/>
</dbReference>
<dbReference type="PANTHER" id="PTHR43322:SF5">
    <property type="entry name" value="1-DEOXY-D-XYLULOSE-5-PHOSPHATE SYNTHASE, CHLOROPLASTIC"/>
    <property type="match status" value="1"/>
</dbReference>
<dbReference type="Pfam" id="PF13292">
    <property type="entry name" value="DXP_synthase_N"/>
    <property type="match status" value="1"/>
</dbReference>
<dbReference type="Pfam" id="PF02779">
    <property type="entry name" value="Transket_pyr"/>
    <property type="match status" value="1"/>
</dbReference>
<dbReference type="Pfam" id="PF02780">
    <property type="entry name" value="Transketolase_C"/>
    <property type="match status" value="1"/>
</dbReference>
<dbReference type="SMART" id="SM00861">
    <property type="entry name" value="Transket_pyr"/>
    <property type="match status" value="1"/>
</dbReference>
<dbReference type="SUPFAM" id="SSF52518">
    <property type="entry name" value="Thiamin diphosphate-binding fold (THDP-binding)"/>
    <property type="match status" value="2"/>
</dbReference>
<dbReference type="SUPFAM" id="SSF52922">
    <property type="entry name" value="TK C-terminal domain-like"/>
    <property type="match status" value="1"/>
</dbReference>
<dbReference type="PROSITE" id="PS00801">
    <property type="entry name" value="TRANSKETOLASE_1"/>
    <property type="match status" value="1"/>
</dbReference>
<dbReference type="PROSITE" id="PS00802">
    <property type="entry name" value="TRANSKETOLASE_2"/>
    <property type="match status" value="1"/>
</dbReference>
<feature type="chain" id="PRO_1000115772" description="1-deoxy-D-xylulose-5-phosphate synthase">
    <location>
        <begin position="1"/>
        <end position="621"/>
    </location>
</feature>
<feature type="binding site" evidence="1">
    <location>
        <position position="80"/>
    </location>
    <ligand>
        <name>thiamine diphosphate</name>
        <dbReference type="ChEBI" id="CHEBI:58937"/>
    </ligand>
</feature>
<feature type="binding site" evidence="1">
    <location>
        <begin position="121"/>
        <end position="123"/>
    </location>
    <ligand>
        <name>thiamine diphosphate</name>
        <dbReference type="ChEBI" id="CHEBI:58937"/>
    </ligand>
</feature>
<feature type="binding site" evidence="1">
    <location>
        <position position="152"/>
    </location>
    <ligand>
        <name>Mg(2+)</name>
        <dbReference type="ChEBI" id="CHEBI:18420"/>
    </ligand>
</feature>
<feature type="binding site" evidence="1">
    <location>
        <begin position="153"/>
        <end position="154"/>
    </location>
    <ligand>
        <name>thiamine diphosphate</name>
        <dbReference type="ChEBI" id="CHEBI:58937"/>
    </ligand>
</feature>
<feature type="binding site" evidence="1">
    <location>
        <position position="181"/>
    </location>
    <ligand>
        <name>Mg(2+)</name>
        <dbReference type="ChEBI" id="CHEBI:18420"/>
    </ligand>
</feature>
<feature type="binding site" evidence="1">
    <location>
        <position position="181"/>
    </location>
    <ligand>
        <name>thiamine diphosphate</name>
        <dbReference type="ChEBI" id="CHEBI:58937"/>
    </ligand>
</feature>
<feature type="binding site" evidence="1">
    <location>
        <position position="288"/>
    </location>
    <ligand>
        <name>thiamine diphosphate</name>
        <dbReference type="ChEBI" id="CHEBI:58937"/>
    </ligand>
</feature>
<feature type="binding site" evidence="1">
    <location>
        <position position="370"/>
    </location>
    <ligand>
        <name>thiamine diphosphate</name>
        <dbReference type="ChEBI" id="CHEBI:58937"/>
    </ligand>
</feature>
<sequence>MSLDISQYPVLAQANTPDELRQLPQAVLPQLADELRGFLLKSVGKSSGHFASGLGTVELTVALHYVYNTPFDRLIWDVGHQAYPHKILTGRRDAMHTIRQKGGIHPFPWREESEYDTFSVGHSGTSISAALAMAVAAEKEQAGRKVVSVIGDGAMTGGMVFEAMNHAGDLHNDMLVVLNDNEMSISENVGALNNHLAQLMSGRFYTTIRESSKKVLKGMPVIKEMAKRTEEHLKGMVVPGTMFEELGFNYIGPIDGHDVDALVETMRNMRNLSGPQILHIMTKKGRGYEPAEKDPIGWHAVPKFDPSTFEKPASKPSNPTFSQVFGKWLCDVAEKDKKVLGITPAMREGSGMVEFSQRFPKQYFDAAIAEQHAVTLGAGFACEGLKPVVAIYSTFLQRGYDQLIHDVALQKLPVLFAIDRGGIVGADGPTHQGAFDLSFMRTVPNMVIMAPSDENECRQMLYTGYCYNDGPTAVRYPRGSATGAPQIEEMTALPIGKGLIKRQGQKVAILNFGTLLASVLTAGESLDATVADMRFVKPLDVELIKELANSHDVLVTVEENAIMGGAGSGVLELLQQLKQPMPVLQLGLPDEFIKHGDSGEIIAELKLDAAGILEQIESYLA</sequence>
<keyword id="KW-0414">Isoprene biosynthesis</keyword>
<keyword id="KW-0460">Magnesium</keyword>
<keyword id="KW-0479">Metal-binding</keyword>
<keyword id="KW-1185">Reference proteome</keyword>
<keyword id="KW-0784">Thiamine biosynthesis</keyword>
<keyword id="KW-0786">Thiamine pyrophosphate</keyword>
<keyword id="KW-0808">Transferase</keyword>
<gene>
    <name evidence="1" type="primary">dxs</name>
    <name type="ordered locus">Swoo_3478</name>
</gene>
<comment type="function">
    <text evidence="1">Catalyzes the acyloin condensation reaction between C atoms 2 and 3 of pyruvate and glyceraldehyde 3-phosphate to yield 1-deoxy-D-xylulose-5-phosphate (DXP).</text>
</comment>
<comment type="catalytic activity">
    <reaction evidence="1">
        <text>D-glyceraldehyde 3-phosphate + pyruvate + H(+) = 1-deoxy-D-xylulose 5-phosphate + CO2</text>
        <dbReference type="Rhea" id="RHEA:12605"/>
        <dbReference type="ChEBI" id="CHEBI:15361"/>
        <dbReference type="ChEBI" id="CHEBI:15378"/>
        <dbReference type="ChEBI" id="CHEBI:16526"/>
        <dbReference type="ChEBI" id="CHEBI:57792"/>
        <dbReference type="ChEBI" id="CHEBI:59776"/>
        <dbReference type="EC" id="2.2.1.7"/>
    </reaction>
</comment>
<comment type="cofactor">
    <cofactor evidence="1">
        <name>Mg(2+)</name>
        <dbReference type="ChEBI" id="CHEBI:18420"/>
    </cofactor>
    <text evidence="1">Binds 1 Mg(2+) ion per subunit.</text>
</comment>
<comment type="cofactor">
    <cofactor evidence="1">
        <name>thiamine diphosphate</name>
        <dbReference type="ChEBI" id="CHEBI:58937"/>
    </cofactor>
    <text evidence="1">Binds 1 thiamine pyrophosphate per subunit.</text>
</comment>
<comment type="pathway">
    <text evidence="1">Metabolic intermediate biosynthesis; 1-deoxy-D-xylulose 5-phosphate biosynthesis; 1-deoxy-D-xylulose 5-phosphate from D-glyceraldehyde 3-phosphate and pyruvate: step 1/1.</text>
</comment>
<comment type="subunit">
    <text evidence="1">Homodimer.</text>
</comment>
<comment type="similarity">
    <text evidence="1">Belongs to the transketolase family. DXPS subfamily.</text>
</comment>